<gene>
    <name type="primary">FYV10</name>
    <name type="ordered locus">CAGL0G02651g</name>
</gene>
<sequence length="488" mass="56784">MAETTSLINEPDVDFHLKLNQHSFNIPYEQLQRNSRYLNRLIEKEIDELNSHYERLNIALGSGNIEGDKKALQELKDIIRSVEIFEKRLQKRVNEEVPILKRLEVRINFFKELENAKQQVADITPLMEWYLKFTNILIGDYLTRHTTSNSSPELGLPGVTFLEQEGIQDLLDTDILLTGNRISTALVDNHDLRPLLDWINDSKSYLKKNGSRLEFEARFQQYIELLKASEYEEAIKCFQDYLLKFVNTNFNELTHASGLLLSINYCKEIMKAKASERSAILTKDDGNPLENEIRAYKYFFHKKPKIVEQQHVKPVDLSYMNLSQNTDFEKYMLLLDDKRWGLLNELFLKDYYSLYGISQNDPLLIYLSLGISTLKTRECLHHRRVAKSSSPLVDKKVEEEVLQNSCPVCDKTFAPIAESLPFAHHTQSQLFDDPIMLPNGNIYEAKRLKRLAKYLVDIKAIELGETEVIDPIDKQIYNEADFITMYPT</sequence>
<organism>
    <name type="scientific">Candida glabrata (strain ATCC 2001 / BCRC 20586 / JCM 3761 / NBRC 0622 / NRRL Y-65 / CBS 138)</name>
    <name type="common">Yeast</name>
    <name type="synonym">Nakaseomyces glabratus</name>
    <dbReference type="NCBI Taxonomy" id="284593"/>
    <lineage>
        <taxon>Eukaryota</taxon>
        <taxon>Fungi</taxon>
        <taxon>Dikarya</taxon>
        <taxon>Ascomycota</taxon>
        <taxon>Saccharomycotina</taxon>
        <taxon>Saccharomycetes</taxon>
        <taxon>Saccharomycetales</taxon>
        <taxon>Saccharomycetaceae</taxon>
        <taxon>Nakaseomyces</taxon>
    </lineage>
</organism>
<reference key="1">
    <citation type="journal article" date="2004" name="Nature">
        <title>Genome evolution in yeasts.</title>
        <authorList>
            <person name="Dujon B."/>
            <person name="Sherman D."/>
            <person name="Fischer G."/>
            <person name="Durrens P."/>
            <person name="Casaregola S."/>
            <person name="Lafontaine I."/>
            <person name="de Montigny J."/>
            <person name="Marck C."/>
            <person name="Neuveglise C."/>
            <person name="Talla E."/>
            <person name="Goffard N."/>
            <person name="Frangeul L."/>
            <person name="Aigle M."/>
            <person name="Anthouard V."/>
            <person name="Babour A."/>
            <person name="Barbe V."/>
            <person name="Barnay S."/>
            <person name="Blanchin S."/>
            <person name="Beckerich J.-M."/>
            <person name="Beyne E."/>
            <person name="Bleykasten C."/>
            <person name="Boisrame A."/>
            <person name="Boyer J."/>
            <person name="Cattolico L."/>
            <person name="Confanioleri F."/>
            <person name="de Daruvar A."/>
            <person name="Despons L."/>
            <person name="Fabre E."/>
            <person name="Fairhead C."/>
            <person name="Ferry-Dumazet H."/>
            <person name="Groppi A."/>
            <person name="Hantraye F."/>
            <person name="Hennequin C."/>
            <person name="Jauniaux N."/>
            <person name="Joyet P."/>
            <person name="Kachouri R."/>
            <person name="Kerrest A."/>
            <person name="Koszul R."/>
            <person name="Lemaire M."/>
            <person name="Lesur I."/>
            <person name="Ma L."/>
            <person name="Muller H."/>
            <person name="Nicaud J.-M."/>
            <person name="Nikolski M."/>
            <person name="Oztas S."/>
            <person name="Ozier-Kalogeropoulos O."/>
            <person name="Pellenz S."/>
            <person name="Potier S."/>
            <person name="Richard G.-F."/>
            <person name="Straub M.-L."/>
            <person name="Suleau A."/>
            <person name="Swennen D."/>
            <person name="Tekaia F."/>
            <person name="Wesolowski-Louvel M."/>
            <person name="Westhof E."/>
            <person name="Wirth B."/>
            <person name="Zeniou-Meyer M."/>
            <person name="Zivanovic Y."/>
            <person name="Bolotin-Fukuhara M."/>
            <person name="Thierry A."/>
            <person name="Bouchier C."/>
            <person name="Caudron B."/>
            <person name="Scarpelli C."/>
            <person name="Gaillardin C."/>
            <person name="Weissenbach J."/>
            <person name="Wincker P."/>
            <person name="Souciet J.-L."/>
        </authorList>
    </citation>
    <scope>NUCLEOTIDE SEQUENCE [LARGE SCALE GENOMIC DNA]</scope>
    <source>
        <strain>ATCC 2001 / BCRC 20586 / JCM 3761 / NBRC 0622 / NRRL Y-65 / CBS 138</strain>
    </source>
</reference>
<name>FYV10_CANGA</name>
<proteinExistence type="inferred from homology"/>
<accession>Q6FTG6</accession>
<evidence type="ECO:0000250" key="1"/>
<evidence type="ECO:0000255" key="2">
    <source>
        <dbReference type="PROSITE-ProRule" id="PRU00058"/>
    </source>
</evidence>
<evidence type="ECO:0000255" key="3">
    <source>
        <dbReference type="PROSITE-ProRule" id="PRU01215"/>
    </source>
</evidence>
<evidence type="ECO:0000305" key="4"/>
<keyword id="KW-0963">Cytoplasm</keyword>
<keyword id="KW-0479">Metal-binding</keyword>
<keyword id="KW-0539">Nucleus</keyword>
<keyword id="KW-1185">Reference proteome</keyword>
<keyword id="KW-0862">Zinc</keyword>
<keyword id="KW-0863">Zinc-finger</keyword>
<dbReference type="EMBL" id="CR380953">
    <property type="protein sequence ID" value="CAG59405.1"/>
    <property type="molecule type" value="Genomic_DNA"/>
</dbReference>
<dbReference type="RefSeq" id="XP_446478.1">
    <property type="nucleotide sequence ID" value="XM_446478.1"/>
</dbReference>
<dbReference type="SMR" id="Q6FTG6"/>
<dbReference type="FunCoup" id="Q6FTG6">
    <property type="interactions" value="964"/>
</dbReference>
<dbReference type="STRING" id="284593.Q6FTG6"/>
<dbReference type="EnsemblFungi" id="CAGL0G02651g-T">
    <property type="protein sequence ID" value="CAGL0G02651g-T-p1"/>
    <property type="gene ID" value="CAGL0G02651g"/>
</dbReference>
<dbReference type="KEGG" id="cgr:2888366"/>
<dbReference type="CGD" id="CAL0130701">
    <property type="gene designation" value="CAGL0G02651g"/>
</dbReference>
<dbReference type="VEuPathDB" id="FungiDB:CAGL0G02651g"/>
<dbReference type="eggNOG" id="KOG0396">
    <property type="taxonomic scope" value="Eukaryota"/>
</dbReference>
<dbReference type="HOGENOM" id="CLU_027445_2_0_1"/>
<dbReference type="InParanoid" id="Q6FTG6"/>
<dbReference type="Proteomes" id="UP000002428">
    <property type="component" value="Chromosome G"/>
</dbReference>
<dbReference type="GO" id="GO:0005737">
    <property type="term" value="C:cytoplasm"/>
    <property type="evidence" value="ECO:0007669"/>
    <property type="project" value="UniProtKB-SubCell"/>
</dbReference>
<dbReference type="GO" id="GO:0034657">
    <property type="term" value="C:GID complex"/>
    <property type="evidence" value="ECO:0007669"/>
    <property type="project" value="EnsemblFungi"/>
</dbReference>
<dbReference type="GO" id="GO:0005634">
    <property type="term" value="C:nucleus"/>
    <property type="evidence" value="ECO:0007669"/>
    <property type="project" value="UniProtKB-SubCell"/>
</dbReference>
<dbReference type="GO" id="GO:0061630">
    <property type="term" value="F:ubiquitin protein ligase activity"/>
    <property type="evidence" value="ECO:0007669"/>
    <property type="project" value="EnsemblFungi"/>
</dbReference>
<dbReference type="GO" id="GO:0008270">
    <property type="term" value="F:zinc ion binding"/>
    <property type="evidence" value="ECO:0007669"/>
    <property type="project" value="UniProtKB-KW"/>
</dbReference>
<dbReference type="GO" id="GO:0043066">
    <property type="term" value="P:negative regulation of apoptotic process"/>
    <property type="evidence" value="ECO:0007669"/>
    <property type="project" value="EnsemblFungi"/>
</dbReference>
<dbReference type="GO" id="GO:0045721">
    <property type="term" value="P:negative regulation of gluconeogenesis"/>
    <property type="evidence" value="ECO:0007669"/>
    <property type="project" value="EnsemblFungi"/>
</dbReference>
<dbReference type="GO" id="GO:0043161">
    <property type="term" value="P:proteasome-mediated ubiquitin-dependent protein catabolic process"/>
    <property type="evidence" value="ECO:0007669"/>
    <property type="project" value="EnsemblFungi"/>
</dbReference>
<dbReference type="InterPro" id="IPR024964">
    <property type="entry name" value="CTLH/CRA"/>
</dbReference>
<dbReference type="InterPro" id="IPR006595">
    <property type="entry name" value="CTLH_C"/>
</dbReference>
<dbReference type="InterPro" id="IPR045098">
    <property type="entry name" value="Fyv10_fam"/>
</dbReference>
<dbReference type="InterPro" id="IPR044063">
    <property type="entry name" value="ZF_RING_GID"/>
</dbReference>
<dbReference type="PANTHER" id="PTHR12170:SF2">
    <property type="entry name" value="E3 UBIQUITIN-PROTEIN TRANSFERASE MAEA"/>
    <property type="match status" value="1"/>
</dbReference>
<dbReference type="PANTHER" id="PTHR12170">
    <property type="entry name" value="MACROPHAGE ERYTHROBLAST ATTACHER-RELATED"/>
    <property type="match status" value="1"/>
</dbReference>
<dbReference type="Pfam" id="PF10607">
    <property type="entry name" value="CTLH"/>
    <property type="match status" value="1"/>
</dbReference>
<dbReference type="SMART" id="SM00668">
    <property type="entry name" value="CTLH"/>
    <property type="match status" value="1"/>
</dbReference>
<dbReference type="PROSITE" id="PS50897">
    <property type="entry name" value="CTLH"/>
    <property type="match status" value="1"/>
</dbReference>
<dbReference type="PROSITE" id="PS51867">
    <property type="entry name" value="ZF_RING_GID"/>
    <property type="match status" value="1"/>
</dbReference>
<feature type="chain" id="PRO_0000292455" description="Protein FYV10">
    <location>
        <begin position="1"/>
        <end position="488"/>
    </location>
</feature>
<feature type="domain" description="CTLH" evidence="2">
    <location>
        <begin position="175"/>
        <end position="233"/>
    </location>
</feature>
<feature type="zinc finger region" description="RING-Gid-type" evidence="3">
    <location>
        <begin position="406"/>
        <end position="473"/>
    </location>
</feature>
<protein>
    <recommendedName>
        <fullName>Protein FYV10</fullName>
    </recommendedName>
</protein>
<comment type="function">
    <text evidence="1">Involved in the proteasome-dependent degradation of fructose-1,6-bisphosphatase.</text>
</comment>
<comment type="subcellular location">
    <subcellularLocation>
        <location evidence="1">Cytoplasm</location>
    </subcellularLocation>
    <subcellularLocation>
        <location evidence="1">Nucleus</location>
    </subcellularLocation>
</comment>
<comment type="similarity">
    <text evidence="4">Belongs to the FYV10 family.</text>
</comment>